<evidence type="ECO:0000255" key="1">
    <source>
        <dbReference type="HAMAP-Rule" id="MF_00294"/>
    </source>
</evidence>
<evidence type="ECO:0000305" key="2"/>
<organism>
    <name type="scientific">Clostridium botulinum (strain ATCC 19397 / Type A)</name>
    <dbReference type="NCBI Taxonomy" id="441770"/>
    <lineage>
        <taxon>Bacteria</taxon>
        <taxon>Bacillati</taxon>
        <taxon>Bacillota</taxon>
        <taxon>Clostridia</taxon>
        <taxon>Eubacteriales</taxon>
        <taxon>Clostridiaceae</taxon>
        <taxon>Clostridium</taxon>
    </lineage>
</organism>
<gene>
    <name evidence="1" type="primary">rpmG</name>
    <name type="ordered locus">CLB_3552</name>
</gene>
<sequence>MRVKVTLACTECKRRNYNTMKNKKNDPDRLEMNKYCPHCHKHAAHKETK</sequence>
<reference key="1">
    <citation type="journal article" date="2007" name="PLoS ONE">
        <title>Analysis of the neurotoxin complex genes in Clostridium botulinum A1-A4 and B1 strains: BoNT/A3, /Ba4 and /B1 clusters are located within plasmids.</title>
        <authorList>
            <person name="Smith T.J."/>
            <person name="Hill K.K."/>
            <person name="Foley B.T."/>
            <person name="Detter J.C."/>
            <person name="Munk A.C."/>
            <person name="Bruce D.C."/>
            <person name="Doggett N.A."/>
            <person name="Smith L.A."/>
            <person name="Marks J.D."/>
            <person name="Xie G."/>
            <person name="Brettin T.S."/>
        </authorList>
    </citation>
    <scope>NUCLEOTIDE SEQUENCE [LARGE SCALE GENOMIC DNA]</scope>
    <source>
        <strain>ATCC 19397 / Type A</strain>
    </source>
</reference>
<accession>A7FZ84</accession>
<name>RL33_CLOB1</name>
<feature type="chain" id="PRO_0000356432" description="Large ribosomal subunit protein bL33">
    <location>
        <begin position="1"/>
        <end position="49"/>
    </location>
</feature>
<protein>
    <recommendedName>
        <fullName evidence="1">Large ribosomal subunit protein bL33</fullName>
    </recommendedName>
    <alternativeName>
        <fullName evidence="2">50S ribosomal protein L33</fullName>
    </alternativeName>
</protein>
<comment type="similarity">
    <text evidence="1">Belongs to the bacterial ribosomal protein bL33 family.</text>
</comment>
<dbReference type="EMBL" id="CP000726">
    <property type="protein sequence ID" value="ABS33908.1"/>
    <property type="molecule type" value="Genomic_DNA"/>
</dbReference>
<dbReference type="RefSeq" id="WP_003357626.1">
    <property type="nucleotide sequence ID" value="NC_009697.1"/>
</dbReference>
<dbReference type="SMR" id="A7FZ84"/>
<dbReference type="GeneID" id="5187732"/>
<dbReference type="KEGG" id="cba:CLB_3552"/>
<dbReference type="HOGENOM" id="CLU_190949_0_2_9"/>
<dbReference type="GO" id="GO:0005737">
    <property type="term" value="C:cytoplasm"/>
    <property type="evidence" value="ECO:0007669"/>
    <property type="project" value="UniProtKB-ARBA"/>
</dbReference>
<dbReference type="GO" id="GO:1990904">
    <property type="term" value="C:ribonucleoprotein complex"/>
    <property type="evidence" value="ECO:0007669"/>
    <property type="project" value="UniProtKB-KW"/>
</dbReference>
<dbReference type="GO" id="GO:0005840">
    <property type="term" value="C:ribosome"/>
    <property type="evidence" value="ECO:0007669"/>
    <property type="project" value="UniProtKB-KW"/>
</dbReference>
<dbReference type="GO" id="GO:0003735">
    <property type="term" value="F:structural constituent of ribosome"/>
    <property type="evidence" value="ECO:0007669"/>
    <property type="project" value="InterPro"/>
</dbReference>
<dbReference type="GO" id="GO:0006412">
    <property type="term" value="P:translation"/>
    <property type="evidence" value="ECO:0007669"/>
    <property type="project" value="UniProtKB-UniRule"/>
</dbReference>
<dbReference type="Gene3D" id="2.20.28.120">
    <property type="entry name" value="Ribosomal protein L33"/>
    <property type="match status" value="1"/>
</dbReference>
<dbReference type="HAMAP" id="MF_00294">
    <property type="entry name" value="Ribosomal_bL33"/>
    <property type="match status" value="1"/>
</dbReference>
<dbReference type="InterPro" id="IPR001705">
    <property type="entry name" value="Ribosomal_bL33"/>
</dbReference>
<dbReference type="InterPro" id="IPR018264">
    <property type="entry name" value="Ribosomal_bL33_CS"/>
</dbReference>
<dbReference type="InterPro" id="IPR038584">
    <property type="entry name" value="Ribosomal_bL33_sf"/>
</dbReference>
<dbReference type="InterPro" id="IPR011332">
    <property type="entry name" value="Ribosomal_zn-bd"/>
</dbReference>
<dbReference type="NCBIfam" id="NF001764">
    <property type="entry name" value="PRK00504.1"/>
    <property type="match status" value="1"/>
</dbReference>
<dbReference type="NCBIfam" id="NF001860">
    <property type="entry name" value="PRK00595.1"/>
    <property type="match status" value="1"/>
</dbReference>
<dbReference type="NCBIfam" id="TIGR01023">
    <property type="entry name" value="rpmG_bact"/>
    <property type="match status" value="1"/>
</dbReference>
<dbReference type="PANTHER" id="PTHR43168">
    <property type="entry name" value="50S RIBOSOMAL PROTEIN L33, CHLOROPLASTIC"/>
    <property type="match status" value="1"/>
</dbReference>
<dbReference type="PANTHER" id="PTHR43168:SF2">
    <property type="entry name" value="LARGE RIBOSOMAL SUBUNIT PROTEIN BL33C"/>
    <property type="match status" value="1"/>
</dbReference>
<dbReference type="Pfam" id="PF00471">
    <property type="entry name" value="Ribosomal_L33"/>
    <property type="match status" value="1"/>
</dbReference>
<dbReference type="SUPFAM" id="SSF57829">
    <property type="entry name" value="Zn-binding ribosomal proteins"/>
    <property type="match status" value="1"/>
</dbReference>
<dbReference type="PROSITE" id="PS00582">
    <property type="entry name" value="RIBOSOMAL_L33"/>
    <property type="match status" value="1"/>
</dbReference>
<proteinExistence type="inferred from homology"/>
<keyword id="KW-0687">Ribonucleoprotein</keyword>
<keyword id="KW-0689">Ribosomal protein</keyword>